<dbReference type="EC" id="4.2.1.8" evidence="1"/>
<dbReference type="EMBL" id="AP009510">
    <property type="protein sequence ID" value="BAG13552.1"/>
    <property type="molecule type" value="Genomic_DNA"/>
</dbReference>
<dbReference type="RefSeq" id="WP_015423081.1">
    <property type="nucleotide sequence ID" value="NC_020419.1"/>
</dbReference>
<dbReference type="SMR" id="B1GZ70"/>
<dbReference type="STRING" id="471821.TGRD_069"/>
<dbReference type="KEGG" id="rsd:TGRD_069"/>
<dbReference type="PATRIC" id="fig|471821.5.peg.110"/>
<dbReference type="HOGENOM" id="CLU_058621_1_0_0"/>
<dbReference type="UniPathway" id="UPA00246"/>
<dbReference type="Proteomes" id="UP000001691">
    <property type="component" value="Chromosome"/>
</dbReference>
<dbReference type="GO" id="GO:0008198">
    <property type="term" value="F:ferrous iron binding"/>
    <property type="evidence" value="ECO:0007669"/>
    <property type="project" value="TreeGrafter"/>
</dbReference>
<dbReference type="GO" id="GO:0030145">
    <property type="term" value="F:manganese ion binding"/>
    <property type="evidence" value="ECO:0007669"/>
    <property type="project" value="TreeGrafter"/>
</dbReference>
<dbReference type="GO" id="GO:0008927">
    <property type="term" value="F:mannonate dehydratase activity"/>
    <property type="evidence" value="ECO:0007669"/>
    <property type="project" value="UniProtKB-UniRule"/>
</dbReference>
<dbReference type="GO" id="GO:0042840">
    <property type="term" value="P:D-glucuronate catabolic process"/>
    <property type="evidence" value="ECO:0007669"/>
    <property type="project" value="TreeGrafter"/>
</dbReference>
<dbReference type="Gene3D" id="3.20.20.150">
    <property type="entry name" value="Divalent-metal-dependent TIM barrel enzymes"/>
    <property type="match status" value="1"/>
</dbReference>
<dbReference type="HAMAP" id="MF_00106">
    <property type="entry name" value="UxuA"/>
    <property type="match status" value="1"/>
</dbReference>
<dbReference type="InterPro" id="IPR004628">
    <property type="entry name" value="Man_deHydtase"/>
</dbReference>
<dbReference type="InterPro" id="IPR036237">
    <property type="entry name" value="Xyl_isomerase-like_sf"/>
</dbReference>
<dbReference type="NCBIfam" id="NF003027">
    <property type="entry name" value="PRK03906.1"/>
    <property type="match status" value="1"/>
</dbReference>
<dbReference type="NCBIfam" id="TIGR00695">
    <property type="entry name" value="uxuA"/>
    <property type="match status" value="1"/>
</dbReference>
<dbReference type="PANTHER" id="PTHR30387">
    <property type="entry name" value="MANNONATE DEHYDRATASE"/>
    <property type="match status" value="1"/>
</dbReference>
<dbReference type="PANTHER" id="PTHR30387:SF2">
    <property type="entry name" value="MANNONATE DEHYDRATASE"/>
    <property type="match status" value="1"/>
</dbReference>
<dbReference type="Pfam" id="PF03786">
    <property type="entry name" value="UxuA"/>
    <property type="match status" value="1"/>
</dbReference>
<dbReference type="PIRSF" id="PIRSF016049">
    <property type="entry name" value="Man_dehyd"/>
    <property type="match status" value="1"/>
</dbReference>
<dbReference type="SUPFAM" id="SSF51658">
    <property type="entry name" value="Xylose isomerase-like"/>
    <property type="match status" value="1"/>
</dbReference>
<sequence length="364" mass="42121">MKMTFRWYGENVDPIPLRYIRQIPGVEGIVWALHDIPAGECWTVERIEEVKAQAAKYNFNTDVVESVNVHEDIKLGLPSRKKYIENYKNTLKNLGRAGVKVVCYNFMPVFDWTRTDLYKPQSDGSTALFYEKAKVDNINPVKFLEQMSKQEGLLTMPGWEPERLSKIKELFEAYKEIKDDDLWENLKYFLQEIIPVAQESGIKMAIHPDDPPWSIFGLSRIITCRDNIKKFLSLVDNPSNGLTLCSGSLGSCTKNNIAAIVREFGDRIYFAHIRNIRHFKNGDFTETSHKTSDGSLDITEIVKAYHDINYKYYVRPDHGRHIWDEKCRPGYGLYDRSLGIMYIFGLWDAFEKISASKRGQYGVE</sequence>
<accession>B1GZ70</accession>
<protein>
    <recommendedName>
        <fullName evidence="1">Mannonate dehydratase</fullName>
        <ecNumber evidence="1">4.2.1.8</ecNumber>
    </recommendedName>
    <alternativeName>
        <fullName evidence="1">D-mannonate hydro-lyase</fullName>
    </alternativeName>
</protein>
<evidence type="ECO:0000255" key="1">
    <source>
        <dbReference type="HAMAP-Rule" id="MF_00106"/>
    </source>
</evidence>
<feature type="chain" id="PRO_1000094228" description="Mannonate dehydratase">
    <location>
        <begin position="1"/>
        <end position="364"/>
    </location>
</feature>
<reference key="1">
    <citation type="journal article" date="2008" name="Proc. Natl. Acad. Sci. U.S.A.">
        <title>Complete genome of the uncultured termite group 1 bacteria in a single host protist cell.</title>
        <authorList>
            <person name="Hongoh Y."/>
            <person name="Sharma V.K."/>
            <person name="Prakash T."/>
            <person name="Noda S."/>
            <person name="Taylor T.D."/>
            <person name="Kudo T."/>
            <person name="Sakaki Y."/>
            <person name="Toyoda A."/>
            <person name="Hattori M."/>
            <person name="Ohkuma M."/>
        </authorList>
    </citation>
    <scope>NUCLEOTIDE SEQUENCE [LARGE SCALE GENOMIC DNA]</scope>
</reference>
<proteinExistence type="inferred from homology"/>
<gene>
    <name evidence="1" type="primary">uxuA</name>
    <name type="ordered locus">TGRD_069</name>
</gene>
<name>UXUA_ENDTX</name>
<comment type="function">
    <text evidence="1">Catalyzes the dehydration of D-mannonate.</text>
</comment>
<comment type="catalytic activity">
    <reaction evidence="1">
        <text>D-mannonate = 2-dehydro-3-deoxy-D-gluconate + H2O</text>
        <dbReference type="Rhea" id="RHEA:20097"/>
        <dbReference type="ChEBI" id="CHEBI:15377"/>
        <dbReference type="ChEBI" id="CHEBI:17767"/>
        <dbReference type="ChEBI" id="CHEBI:57990"/>
        <dbReference type="EC" id="4.2.1.8"/>
    </reaction>
</comment>
<comment type="cofactor">
    <cofactor evidence="1">
        <name>Fe(2+)</name>
        <dbReference type="ChEBI" id="CHEBI:29033"/>
    </cofactor>
    <cofactor evidence="1">
        <name>Mn(2+)</name>
        <dbReference type="ChEBI" id="CHEBI:29035"/>
    </cofactor>
</comment>
<comment type="pathway">
    <text evidence="1">Carbohydrate metabolism; pentose and glucuronate interconversion.</text>
</comment>
<comment type="similarity">
    <text evidence="1">Belongs to the mannonate dehydratase family.</text>
</comment>
<organism>
    <name type="scientific">Endomicrobium trichonymphae</name>
    <dbReference type="NCBI Taxonomy" id="1408204"/>
    <lineage>
        <taxon>Bacteria</taxon>
        <taxon>Pseudomonadati</taxon>
        <taxon>Elusimicrobiota</taxon>
        <taxon>Endomicrobiia</taxon>
        <taxon>Endomicrobiales</taxon>
        <taxon>Endomicrobiaceae</taxon>
        <taxon>Candidatus Endomicrobiellum</taxon>
    </lineage>
</organism>
<keyword id="KW-0408">Iron</keyword>
<keyword id="KW-0456">Lyase</keyword>
<keyword id="KW-0464">Manganese</keyword>